<accession>Q143J3</accession>
<keyword id="KW-0068">Autocatalytic cleavage</keyword>
<keyword id="KW-0963">Cytoplasm</keyword>
<keyword id="KW-0210">Decarboxylase</keyword>
<keyword id="KW-0456">Lyase</keyword>
<keyword id="KW-0566">Pantothenate biosynthesis</keyword>
<keyword id="KW-0670">Pyruvate</keyword>
<keyword id="KW-1185">Reference proteome</keyword>
<keyword id="KW-0704">Schiff base</keyword>
<keyword id="KW-0865">Zymogen</keyword>
<sequence>MQRNMLKSKIHRVAVTHCELHYEGSCAIDEDLLEAANIVENERIDIWNINNGERFSTYAIKGERGSGMISLNGSAARRAQLGDLVIIAAFAVVDEAELKAGWKPDLVFVDDNNRIKGSRDHVPTQNWT</sequence>
<dbReference type="EC" id="4.1.1.11" evidence="1"/>
<dbReference type="EMBL" id="CP000270">
    <property type="protein sequence ID" value="ABE29496.1"/>
    <property type="molecule type" value="Genomic_DNA"/>
</dbReference>
<dbReference type="RefSeq" id="WP_007175926.1">
    <property type="nucleotide sequence ID" value="NZ_CP008760.1"/>
</dbReference>
<dbReference type="SMR" id="Q143J3"/>
<dbReference type="STRING" id="266265.Bxe_A3489"/>
<dbReference type="KEGG" id="bxb:DR64_1192"/>
<dbReference type="KEGG" id="bxe:Bxe_A3489"/>
<dbReference type="eggNOG" id="COG0853">
    <property type="taxonomic scope" value="Bacteria"/>
</dbReference>
<dbReference type="OrthoDB" id="9803983at2"/>
<dbReference type="UniPathway" id="UPA00028">
    <property type="reaction ID" value="UER00002"/>
</dbReference>
<dbReference type="Proteomes" id="UP000001817">
    <property type="component" value="Chromosome 1"/>
</dbReference>
<dbReference type="GO" id="GO:0005829">
    <property type="term" value="C:cytosol"/>
    <property type="evidence" value="ECO:0007669"/>
    <property type="project" value="TreeGrafter"/>
</dbReference>
<dbReference type="GO" id="GO:0004068">
    <property type="term" value="F:aspartate 1-decarboxylase activity"/>
    <property type="evidence" value="ECO:0007669"/>
    <property type="project" value="UniProtKB-UniRule"/>
</dbReference>
<dbReference type="GO" id="GO:0006523">
    <property type="term" value="P:alanine biosynthetic process"/>
    <property type="evidence" value="ECO:0007669"/>
    <property type="project" value="InterPro"/>
</dbReference>
<dbReference type="GO" id="GO:0015940">
    <property type="term" value="P:pantothenate biosynthetic process"/>
    <property type="evidence" value="ECO:0007669"/>
    <property type="project" value="UniProtKB-UniRule"/>
</dbReference>
<dbReference type="CDD" id="cd06919">
    <property type="entry name" value="Asp_decarbox"/>
    <property type="match status" value="1"/>
</dbReference>
<dbReference type="Gene3D" id="2.40.40.20">
    <property type="match status" value="1"/>
</dbReference>
<dbReference type="HAMAP" id="MF_00446">
    <property type="entry name" value="PanD"/>
    <property type="match status" value="1"/>
</dbReference>
<dbReference type="InterPro" id="IPR009010">
    <property type="entry name" value="Asp_de-COase-like_dom_sf"/>
</dbReference>
<dbReference type="InterPro" id="IPR003190">
    <property type="entry name" value="Asp_decarbox"/>
</dbReference>
<dbReference type="NCBIfam" id="TIGR00223">
    <property type="entry name" value="panD"/>
    <property type="match status" value="1"/>
</dbReference>
<dbReference type="PANTHER" id="PTHR21012">
    <property type="entry name" value="ASPARTATE 1-DECARBOXYLASE"/>
    <property type="match status" value="1"/>
</dbReference>
<dbReference type="PANTHER" id="PTHR21012:SF0">
    <property type="entry name" value="ASPARTATE 1-DECARBOXYLASE"/>
    <property type="match status" value="1"/>
</dbReference>
<dbReference type="Pfam" id="PF02261">
    <property type="entry name" value="Asp_decarbox"/>
    <property type="match status" value="1"/>
</dbReference>
<dbReference type="PIRSF" id="PIRSF006246">
    <property type="entry name" value="Asp_decarbox"/>
    <property type="match status" value="1"/>
</dbReference>
<dbReference type="SUPFAM" id="SSF50692">
    <property type="entry name" value="ADC-like"/>
    <property type="match status" value="1"/>
</dbReference>
<protein>
    <recommendedName>
        <fullName evidence="1">Aspartate 1-decarboxylase</fullName>
        <ecNumber evidence="1">4.1.1.11</ecNumber>
    </recommendedName>
    <alternativeName>
        <fullName evidence="1">Aspartate alpha-decarboxylase</fullName>
    </alternativeName>
    <component>
        <recommendedName>
            <fullName evidence="1">Aspartate 1-decarboxylase beta chain</fullName>
        </recommendedName>
    </component>
    <component>
        <recommendedName>
            <fullName evidence="1">Aspartate 1-decarboxylase alpha chain</fullName>
        </recommendedName>
    </component>
</protein>
<gene>
    <name evidence="1" type="primary">panD</name>
    <name type="ordered locus">Bxeno_A0958</name>
    <name type="ORF">Bxe_A3489</name>
</gene>
<feature type="chain" id="PRO_0000306943" description="Aspartate 1-decarboxylase beta chain" evidence="1">
    <location>
        <begin position="1"/>
        <end position="24"/>
    </location>
</feature>
<feature type="chain" id="PRO_0000306944" description="Aspartate 1-decarboxylase alpha chain" evidence="1">
    <location>
        <begin position="25"/>
        <end position="128"/>
    </location>
</feature>
<feature type="active site" description="Schiff-base intermediate with substrate; via pyruvic acid" evidence="1">
    <location>
        <position position="25"/>
    </location>
</feature>
<feature type="active site" description="Proton donor" evidence="1">
    <location>
        <position position="58"/>
    </location>
</feature>
<feature type="binding site" evidence="1">
    <location>
        <position position="57"/>
    </location>
    <ligand>
        <name>substrate</name>
    </ligand>
</feature>
<feature type="binding site" evidence="1">
    <location>
        <begin position="73"/>
        <end position="75"/>
    </location>
    <ligand>
        <name>substrate</name>
    </ligand>
</feature>
<feature type="modified residue" description="Pyruvic acid (Ser)" evidence="1">
    <location>
        <position position="25"/>
    </location>
</feature>
<evidence type="ECO:0000255" key="1">
    <source>
        <dbReference type="HAMAP-Rule" id="MF_00446"/>
    </source>
</evidence>
<reference key="1">
    <citation type="journal article" date="2006" name="Proc. Natl. Acad. Sci. U.S.A.">
        <title>Burkholderia xenovorans LB400 harbors a multi-replicon, 9.73-Mbp genome shaped for versatility.</title>
        <authorList>
            <person name="Chain P.S.G."/>
            <person name="Denef V.J."/>
            <person name="Konstantinidis K.T."/>
            <person name="Vergez L.M."/>
            <person name="Agullo L."/>
            <person name="Reyes V.L."/>
            <person name="Hauser L."/>
            <person name="Cordova M."/>
            <person name="Gomez L."/>
            <person name="Gonzalez M."/>
            <person name="Land M."/>
            <person name="Lao V."/>
            <person name="Larimer F."/>
            <person name="LiPuma J.J."/>
            <person name="Mahenthiralingam E."/>
            <person name="Malfatti S.A."/>
            <person name="Marx C.J."/>
            <person name="Parnell J.J."/>
            <person name="Ramette A."/>
            <person name="Richardson P."/>
            <person name="Seeger M."/>
            <person name="Smith D."/>
            <person name="Spilker T."/>
            <person name="Sul W.J."/>
            <person name="Tsoi T.V."/>
            <person name="Ulrich L.E."/>
            <person name="Zhulin I.B."/>
            <person name="Tiedje J.M."/>
        </authorList>
    </citation>
    <scope>NUCLEOTIDE SEQUENCE [LARGE SCALE GENOMIC DNA]</scope>
    <source>
        <strain>LB400</strain>
    </source>
</reference>
<comment type="function">
    <text evidence="1">Catalyzes the pyruvoyl-dependent decarboxylation of aspartate to produce beta-alanine.</text>
</comment>
<comment type="catalytic activity">
    <reaction evidence="1">
        <text>L-aspartate + H(+) = beta-alanine + CO2</text>
        <dbReference type="Rhea" id="RHEA:19497"/>
        <dbReference type="ChEBI" id="CHEBI:15378"/>
        <dbReference type="ChEBI" id="CHEBI:16526"/>
        <dbReference type="ChEBI" id="CHEBI:29991"/>
        <dbReference type="ChEBI" id="CHEBI:57966"/>
        <dbReference type="EC" id="4.1.1.11"/>
    </reaction>
</comment>
<comment type="cofactor">
    <cofactor evidence="1">
        <name>pyruvate</name>
        <dbReference type="ChEBI" id="CHEBI:15361"/>
    </cofactor>
    <text evidence="1">Binds 1 pyruvoyl group covalently per subunit.</text>
</comment>
<comment type="pathway">
    <text evidence="1">Cofactor biosynthesis; (R)-pantothenate biosynthesis; beta-alanine from L-aspartate: step 1/1.</text>
</comment>
<comment type="subunit">
    <text evidence="1">Heterooctamer of four alpha and four beta subunits.</text>
</comment>
<comment type="subcellular location">
    <subcellularLocation>
        <location evidence="1">Cytoplasm</location>
    </subcellularLocation>
</comment>
<comment type="PTM">
    <text evidence="1">Is synthesized initially as an inactive proenzyme, which is activated by self-cleavage at a specific serine bond to produce a beta-subunit with a hydroxyl group at its C-terminus and an alpha-subunit with a pyruvoyl group at its N-terminus.</text>
</comment>
<comment type="similarity">
    <text evidence="1">Belongs to the PanD family.</text>
</comment>
<name>PAND_PARXL</name>
<organism>
    <name type="scientific">Paraburkholderia xenovorans (strain LB400)</name>
    <dbReference type="NCBI Taxonomy" id="266265"/>
    <lineage>
        <taxon>Bacteria</taxon>
        <taxon>Pseudomonadati</taxon>
        <taxon>Pseudomonadota</taxon>
        <taxon>Betaproteobacteria</taxon>
        <taxon>Burkholderiales</taxon>
        <taxon>Burkholderiaceae</taxon>
        <taxon>Paraburkholderia</taxon>
    </lineage>
</organism>
<proteinExistence type="inferred from homology"/>